<organism>
    <name type="scientific">Pseudonaja textilis</name>
    <name type="common">Eastern brown snake</name>
    <dbReference type="NCBI Taxonomy" id="8673"/>
    <lineage>
        <taxon>Eukaryota</taxon>
        <taxon>Metazoa</taxon>
        <taxon>Chordata</taxon>
        <taxon>Craniata</taxon>
        <taxon>Vertebrata</taxon>
        <taxon>Euteleostomi</taxon>
        <taxon>Lepidosauria</taxon>
        <taxon>Squamata</taxon>
        <taxon>Bifurcata</taxon>
        <taxon>Unidentata</taxon>
        <taxon>Episquamata</taxon>
        <taxon>Toxicofera</taxon>
        <taxon>Serpentes</taxon>
        <taxon>Colubroidea</taxon>
        <taxon>Elapidae</taxon>
        <taxon>Hydrophiinae</taxon>
        <taxon>Pseudonaja</taxon>
    </lineage>
</organism>
<sequence length="79" mass="8596">MKTLLLTLVMVTIMCLDLGYTLTCYKGYHDTVVCKPHETICYRYLIPATHGNAIPARGCGTSCPGGNHPVCCSTDLCNK</sequence>
<protein>
    <recommendedName>
        <fullName>Short neurotoxin 2</fullName>
        <shortName>SNTX2</shortName>
    </recommendedName>
    <alternativeName>
        <fullName>Alpha-neurotoxin 2</fullName>
    </alternativeName>
</protein>
<evidence type="ECO:0000250" key="1"/>
<evidence type="ECO:0000250" key="2">
    <source>
        <dbReference type="UniProtKB" id="P60301"/>
    </source>
</evidence>
<evidence type="ECO:0000269" key="3">
    <source>
    </source>
</evidence>
<evidence type="ECO:0000305" key="4"/>
<comment type="function">
    <text evidence="3">Binds with high affinity to muscle nicotinic acetylcholine receptor (nAChR) and hinders acetylcholine binding to the receptor, thereby impairing neuromuscular transmission. Competes with the binding of alpha-bungarotoxin on muscle AChR (from Torpedo) with an IC(50) of 0.30 uM. Causes muscle paralysis, spasms and increased respiration.</text>
</comment>
<comment type="subcellular location">
    <subcellularLocation>
        <location evidence="1">Secreted</location>
    </subcellularLocation>
</comment>
<comment type="tissue specificity">
    <text evidence="4">Expressed by the venom gland.</text>
</comment>
<comment type="toxic dose">
    <text evidence="3">LD(50) is 1 mg/kg by intravenous injection into mice.</text>
</comment>
<comment type="similarity">
    <text evidence="4">Belongs to the three-finger toxin family. Short-chain subfamily. Type III alpha-neurotoxin sub-subfamily.</text>
</comment>
<dbReference type="EMBL" id="AF082976">
    <property type="protein sequence ID" value="AAD40968.1"/>
    <property type="molecule type" value="mRNA"/>
</dbReference>
<dbReference type="EMBL" id="AF204970">
    <property type="protein sequence ID" value="AAF75221.1"/>
    <property type="molecule type" value="Genomic_DNA"/>
</dbReference>
<dbReference type="SMR" id="Q9W7K1"/>
<dbReference type="Proteomes" id="UP000472273">
    <property type="component" value="Unplaced"/>
</dbReference>
<dbReference type="GO" id="GO:0005576">
    <property type="term" value="C:extracellular region"/>
    <property type="evidence" value="ECO:0007669"/>
    <property type="project" value="UniProtKB-SubCell"/>
</dbReference>
<dbReference type="GO" id="GO:0030550">
    <property type="term" value="F:acetylcholine receptor inhibitor activity"/>
    <property type="evidence" value="ECO:0007669"/>
    <property type="project" value="UniProtKB-KW"/>
</dbReference>
<dbReference type="GO" id="GO:0099106">
    <property type="term" value="F:ion channel regulator activity"/>
    <property type="evidence" value="ECO:0007669"/>
    <property type="project" value="UniProtKB-KW"/>
</dbReference>
<dbReference type="GO" id="GO:0090729">
    <property type="term" value="F:toxin activity"/>
    <property type="evidence" value="ECO:0007669"/>
    <property type="project" value="UniProtKB-KW"/>
</dbReference>
<dbReference type="CDD" id="cd00206">
    <property type="entry name" value="TFP_snake_toxin"/>
    <property type="match status" value="1"/>
</dbReference>
<dbReference type="Gene3D" id="2.10.60.10">
    <property type="entry name" value="CD59"/>
    <property type="match status" value="1"/>
</dbReference>
<dbReference type="InterPro" id="IPR003571">
    <property type="entry name" value="Snake_3FTx"/>
</dbReference>
<dbReference type="InterPro" id="IPR045860">
    <property type="entry name" value="Snake_toxin-like_sf"/>
</dbReference>
<dbReference type="InterPro" id="IPR054131">
    <property type="entry name" value="Toxin_cobra-type"/>
</dbReference>
<dbReference type="Pfam" id="PF21947">
    <property type="entry name" value="Toxin_cobra-type"/>
    <property type="match status" value="1"/>
</dbReference>
<dbReference type="SUPFAM" id="SSF57302">
    <property type="entry name" value="Snake toxin-like"/>
    <property type="match status" value="1"/>
</dbReference>
<feature type="signal peptide" evidence="1">
    <location>
        <begin position="1"/>
        <end position="21"/>
    </location>
</feature>
<feature type="chain" id="PRO_0000035462" description="Short neurotoxin 2">
    <location>
        <begin position="22"/>
        <end position="79"/>
    </location>
</feature>
<feature type="disulfide bond" evidence="2">
    <location>
        <begin position="24"/>
        <end position="41"/>
    </location>
</feature>
<feature type="disulfide bond" evidence="2">
    <location>
        <begin position="34"/>
        <end position="59"/>
    </location>
</feature>
<feature type="disulfide bond" evidence="2">
    <location>
        <begin position="63"/>
        <end position="71"/>
    </location>
</feature>
<feature type="disulfide bond" evidence="2">
    <location>
        <begin position="72"/>
        <end position="77"/>
    </location>
</feature>
<name>3S32_PSETE</name>
<accession>Q9W7K1</accession>
<keyword id="KW-0008">Acetylcholine receptor inhibiting toxin</keyword>
<keyword id="KW-1015">Disulfide bond</keyword>
<keyword id="KW-0872">Ion channel impairing toxin</keyword>
<keyword id="KW-0528">Neurotoxin</keyword>
<keyword id="KW-0629">Postsynaptic neurotoxin</keyword>
<keyword id="KW-1185">Reference proteome</keyword>
<keyword id="KW-0964">Secreted</keyword>
<keyword id="KW-0732">Signal</keyword>
<keyword id="KW-0800">Toxin</keyword>
<proteinExistence type="evidence at protein level"/>
<reference key="1">
    <citation type="journal article" date="1999" name="Eur. J. Biochem.">
        <title>Postsynaptic short-chain neurotoxins from Pseudonaja textilis: cDNA cloning, expression and protein characterization.</title>
        <authorList>
            <person name="Gong N.L."/>
            <person name="Armugam A."/>
            <person name="Jeyaseelan K."/>
        </authorList>
    </citation>
    <scope>NUCLEOTIDE SEQUENCE [MRNA]</scope>
    <scope>FUNCTION</scope>
    <scope>TOXIC DOSE</scope>
    <source>
        <tissue>Venom gland</tissue>
    </source>
</reference>
<reference key="2">
    <citation type="journal article" date="2000" name="FEBS Lett.">
        <title>Molecular cloning, characterization and evolution of the genes encoding a new group of short-chain alpha-neurotoxins in an Australian elapid, Pseudonaja textilis.</title>
        <authorList>
            <person name="Gong N.L."/>
            <person name="Armugam A."/>
            <person name="Jeyaseelan K."/>
        </authorList>
    </citation>
    <scope>NUCLEOTIDE SEQUENCE [GENOMIC DNA]</scope>
    <source>
        <tissue>Liver</tissue>
    </source>
</reference>
<reference key="3">
    <citation type="journal article" date="2006" name="Mol. Cell. Proteomics">
        <title>Molecular diversity in venom from the Australian Brown snake, Pseudonaja textilis.</title>
        <authorList>
            <person name="Birrell G.W."/>
            <person name="Earl S."/>
            <person name="Masci P.P."/>
            <person name="de Jersey J."/>
            <person name="Wallis T.P."/>
            <person name="Gorman J.J."/>
            <person name="Lavin M.F."/>
        </authorList>
    </citation>
    <scope>IDENTIFICATION BY MASS SPECTROMETRY</scope>
    <source>
        <tissue>Venom</tissue>
    </source>
</reference>